<dbReference type="EC" id="3.4.23.36" evidence="1"/>
<dbReference type="EMBL" id="CP001161">
    <property type="protein sequence ID" value="ACL30521.1"/>
    <property type="molecule type" value="Genomic_DNA"/>
</dbReference>
<dbReference type="RefSeq" id="WP_009874104.1">
    <property type="nucleotide sequence ID" value="NC_011833.1"/>
</dbReference>
<dbReference type="SMR" id="B8D8U9"/>
<dbReference type="KEGG" id="bap:BUAP5A_146"/>
<dbReference type="HOGENOM" id="CLU_083252_4_0_6"/>
<dbReference type="OrthoDB" id="9810259at2"/>
<dbReference type="UniPathway" id="UPA00665"/>
<dbReference type="Proteomes" id="UP000006904">
    <property type="component" value="Chromosome"/>
</dbReference>
<dbReference type="GO" id="GO:0005886">
    <property type="term" value="C:plasma membrane"/>
    <property type="evidence" value="ECO:0007669"/>
    <property type="project" value="UniProtKB-SubCell"/>
</dbReference>
<dbReference type="GO" id="GO:0004190">
    <property type="term" value="F:aspartic-type endopeptidase activity"/>
    <property type="evidence" value="ECO:0007669"/>
    <property type="project" value="UniProtKB-UniRule"/>
</dbReference>
<dbReference type="GO" id="GO:0006508">
    <property type="term" value="P:proteolysis"/>
    <property type="evidence" value="ECO:0007669"/>
    <property type="project" value="UniProtKB-KW"/>
</dbReference>
<dbReference type="HAMAP" id="MF_00161">
    <property type="entry name" value="LspA"/>
    <property type="match status" value="1"/>
</dbReference>
<dbReference type="InterPro" id="IPR001872">
    <property type="entry name" value="Peptidase_A8"/>
</dbReference>
<dbReference type="NCBIfam" id="TIGR00077">
    <property type="entry name" value="lspA"/>
    <property type="match status" value="1"/>
</dbReference>
<dbReference type="PANTHER" id="PTHR33695">
    <property type="entry name" value="LIPOPROTEIN SIGNAL PEPTIDASE"/>
    <property type="match status" value="1"/>
</dbReference>
<dbReference type="PANTHER" id="PTHR33695:SF1">
    <property type="entry name" value="LIPOPROTEIN SIGNAL PEPTIDASE"/>
    <property type="match status" value="1"/>
</dbReference>
<dbReference type="Pfam" id="PF01252">
    <property type="entry name" value="Peptidase_A8"/>
    <property type="match status" value="1"/>
</dbReference>
<dbReference type="PRINTS" id="PR00781">
    <property type="entry name" value="LIPOSIGPTASE"/>
</dbReference>
<dbReference type="PROSITE" id="PS00855">
    <property type="entry name" value="SPASE_II"/>
    <property type="match status" value="1"/>
</dbReference>
<feature type="chain" id="PRO_1000123491" description="Lipoprotein signal peptidase">
    <location>
        <begin position="1"/>
        <end position="160"/>
    </location>
</feature>
<feature type="transmembrane region" description="Helical" evidence="1">
    <location>
        <begin position="13"/>
        <end position="33"/>
    </location>
</feature>
<feature type="transmembrane region" description="Helical" evidence="1">
    <location>
        <begin position="72"/>
        <end position="92"/>
    </location>
</feature>
<feature type="transmembrane region" description="Helical" evidence="1">
    <location>
        <begin position="104"/>
        <end position="124"/>
    </location>
</feature>
<feature type="transmembrane region" description="Helical" evidence="1">
    <location>
        <begin position="134"/>
        <end position="154"/>
    </location>
</feature>
<feature type="active site" evidence="1">
    <location>
        <position position="125"/>
    </location>
</feature>
<feature type="active site" evidence="1">
    <location>
        <position position="143"/>
    </location>
</feature>
<evidence type="ECO:0000255" key="1">
    <source>
        <dbReference type="HAMAP-Rule" id="MF_00161"/>
    </source>
</evidence>
<sequence length="160" mass="18730">MKQKYSKKSKKWIYITTIIFILILDISSKRLIIKYIKTYDTKKIFSVLNFFHVHNHGAAFSFLSDQNGWQKWFLSTVSMLTILVMTRIITKLKKQETKKITAYSLIIAGATGNLIDRIFYGFVVDFIDIHINDWHFATFNIADCSIFIGIIILMRINYST</sequence>
<proteinExistence type="inferred from homology"/>
<reference key="1">
    <citation type="journal article" date="2009" name="Science">
        <title>The dynamics and time scale of ongoing genomic erosion in symbiotic bacteria.</title>
        <authorList>
            <person name="Moran N.A."/>
            <person name="McLaughlin H.J."/>
            <person name="Sorek R."/>
        </authorList>
    </citation>
    <scope>NUCLEOTIDE SEQUENCE [LARGE SCALE GENOMIC DNA]</scope>
    <source>
        <strain>5A</strain>
    </source>
</reference>
<accession>B8D8U9</accession>
<protein>
    <recommendedName>
        <fullName evidence="1">Lipoprotein signal peptidase</fullName>
        <ecNumber evidence="1">3.4.23.36</ecNumber>
    </recommendedName>
    <alternativeName>
        <fullName evidence="1">Prolipoprotein signal peptidase</fullName>
    </alternativeName>
    <alternativeName>
        <fullName evidence="1">Signal peptidase II</fullName>
        <shortName evidence="1">SPase II</shortName>
    </alternativeName>
</protein>
<keyword id="KW-0064">Aspartyl protease</keyword>
<keyword id="KW-0997">Cell inner membrane</keyword>
<keyword id="KW-1003">Cell membrane</keyword>
<keyword id="KW-0378">Hydrolase</keyword>
<keyword id="KW-0472">Membrane</keyword>
<keyword id="KW-0645">Protease</keyword>
<keyword id="KW-0812">Transmembrane</keyword>
<keyword id="KW-1133">Transmembrane helix</keyword>
<name>LSPA_BUCA5</name>
<gene>
    <name evidence="1" type="primary">lspA</name>
    <name type="ordered locus">BUAP5A_146</name>
</gene>
<organism>
    <name type="scientific">Buchnera aphidicola subsp. Acyrthosiphon pisum (strain 5A)</name>
    <dbReference type="NCBI Taxonomy" id="563178"/>
    <lineage>
        <taxon>Bacteria</taxon>
        <taxon>Pseudomonadati</taxon>
        <taxon>Pseudomonadota</taxon>
        <taxon>Gammaproteobacteria</taxon>
        <taxon>Enterobacterales</taxon>
        <taxon>Erwiniaceae</taxon>
        <taxon>Buchnera</taxon>
    </lineage>
</organism>
<comment type="function">
    <text evidence="1">This protein specifically catalyzes the removal of signal peptides from prolipoproteins.</text>
</comment>
<comment type="catalytic activity">
    <reaction evidence="1">
        <text>Release of signal peptides from bacterial membrane prolipoproteins. Hydrolyzes -Xaa-Yaa-Zaa-|-(S,diacylglyceryl)Cys-, in which Xaa is hydrophobic (preferably Leu), and Yaa (Ala or Ser) and Zaa (Gly or Ala) have small, neutral side chains.</text>
        <dbReference type="EC" id="3.4.23.36"/>
    </reaction>
</comment>
<comment type="pathway">
    <text evidence="1">Protein modification; lipoprotein biosynthesis (signal peptide cleavage).</text>
</comment>
<comment type="subcellular location">
    <subcellularLocation>
        <location evidence="1">Cell inner membrane</location>
        <topology evidence="1">Multi-pass membrane protein</topology>
    </subcellularLocation>
</comment>
<comment type="similarity">
    <text evidence="1">Belongs to the peptidase A8 family.</text>
</comment>